<proteinExistence type="inferred from homology"/>
<reference key="1">
    <citation type="journal article" date="2004" name="Nat. Biotechnol.">
        <title>The genome sequence of the anaerobic, sulfate-reducing bacterium Desulfovibrio vulgaris Hildenborough.</title>
        <authorList>
            <person name="Heidelberg J.F."/>
            <person name="Seshadri R."/>
            <person name="Haveman S.A."/>
            <person name="Hemme C.L."/>
            <person name="Paulsen I.T."/>
            <person name="Kolonay J.F."/>
            <person name="Eisen J.A."/>
            <person name="Ward N.L."/>
            <person name="Methe B.A."/>
            <person name="Brinkac L.M."/>
            <person name="Daugherty S.C."/>
            <person name="DeBoy R.T."/>
            <person name="Dodson R.J."/>
            <person name="Durkin A.S."/>
            <person name="Madupu R."/>
            <person name="Nelson W.C."/>
            <person name="Sullivan S.A."/>
            <person name="Fouts D.E."/>
            <person name="Haft D.H."/>
            <person name="Selengut J."/>
            <person name="Peterson J.D."/>
            <person name="Davidsen T.M."/>
            <person name="Zafar N."/>
            <person name="Zhou L."/>
            <person name="Radune D."/>
            <person name="Dimitrov G."/>
            <person name="Hance M."/>
            <person name="Tran K."/>
            <person name="Khouri H.M."/>
            <person name="Gill J."/>
            <person name="Utterback T.R."/>
            <person name="Feldblyum T.V."/>
            <person name="Wall J.D."/>
            <person name="Voordouw G."/>
            <person name="Fraser C.M."/>
        </authorList>
    </citation>
    <scope>NUCLEOTIDE SEQUENCE [LARGE SCALE GENOMIC DNA]</scope>
    <source>
        <strain>ATCC 29579 / DSM 644 / CCUG 34227 / NCIMB 8303 / VKM B-1760 / Hildenborough</strain>
    </source>
</reference>
<gene>
    <name evidence="1" type="primary">glyQ</name>
    <name type="ordered locus">DVU_1898</name>
</gene>
<organism>
    <name type="scientific">Nitratidesulfovibrio vulgaris (strain ATCC 29579 / DSM 644 / CCUG 34227 / NCIMB 8303 / VKM B-1760 / Hildenborough)</name>
    <name type="common">Desulfovibrio vulgaris</name>
    <dbReference type="NCBI Taxonomy" id="882"/>
    <lineage>
        <taxon>Bacteria</taxon>
        <taxon>Pseudomonadati</taxon>
        <taxon>Thermodesulfobacteriota</taxon>
        <taxon>Desulfovibrionia</taxon>
        <taxon>Desulfovibrionales</taxon>
        <taxon>Desulfovibrionaceae</taxon>
        <taxon>Nitratidesulfovibrio</taxon>
    </lineage>
</organism>
<evidence type="ECO:0000255" key="1">
    <source>
        <dbReference type="HAMAP-Rule" id="MF_00254"/>
    </source>
</evidence>
<dbReference type="EC" id="6.1.1.14" evidence="1"/>
<dbReference type="EMBL" id="AE017285">
    <property type="protein sequence ID" value="AAS96374.1"/>
    <property type="molecule type" value="Genomic_DNA"/>
</dbReference>
<dbReference type="RefSeq" id="WP_010939184.1">
    <property type="nucleotide sequence ID" value="NC_002937.3"/>
</dbReference>
<dbReference type="RefSeq" id="YP_011115.1">
    <property type="nucleotide sequence ID" value="NC_002937.3"/>
</dbReference>
<dbReference type="SMR" id="Q72AU2"/>
<dbReference type="IntAct" id="Q72AU2">
    <property type="interactions" value="1"/>
</dbReference>
<dbReference type="STRING" id="882.DVU_1898"/>
<dbReference type="PaxDb" id="882-DVU_1898"/>
<dbReference type="EnsemblBacteria" id="AAS96374">
    <property type="protein sequence ID" value="AAS96374"/>
    <property type="gene ID" value="DVU_1898"/>
</dbReference>
<dbReference type="KEGG" id="dvu:DVU_1898"/>
<dbReference type="PATRIC" id="fig|882.5.peg.1741"/>
<dbReference type="eggNOG" id="COG0752">
    <property type="taxonomic scope" value="Bacteria"/>
</dbReference>
<dbReference type="HOGENOM" id="CLU_057066_1_0_7"/>
<dbReference type="OrthoDB" id="9802183at2"/>
<dbReference type="PhylomeDB" id="Q72AU2"/>
<dbReference type="Proteomes" id="UP000002194">
    <property type="component" value="Chromosome"/>
</dbReference>
<dbReference type="GO" id="GO:0005829">
    <property type="term" value="C:cytosol"/>
    <property type="evidence" value="ECO:0007669"/>
    <property type="project" value="TreeGrafter"/>
</dbReference>
<dbReference type="GO" id="GO:0005524">
    <property type="term" value="F:ATP binding"/>
    <property type="evidence" value="ECO:0007669"/>
    <property type="project" value="UniProtKB-UniRule"/>
</dbReference>
<dbReference type="GO" id="GO:0004820">
    <property type="term" value="F:glycine-tRNA ligase activity"/>
    <property type="evidence" value="ECO:0007669"/>
    <property type="project" value="UniProtKB-UniRule"/>
</dbReference>
<dbReference type="GO" id="GO:0006426">
    <property type="term" value="P:glycyl-tRNA aminoacylation"/>
    <property type="evidence" value="ECO:0007669"/>
    <property type="project" value="UniProtKB-UniRule"/>
</dbReference>
<dbReference type="CDD" id="cd00733">
    <property type="entry name" value="GlyRS_alpha_core"/>
    <property type="match status" value="1"/>
</dbReference>
<dbReference type="FunFam" id="3.30.930.10:FF:000006">
    <property type="entry name" value="Glycine--tRNA ligase alpha subunit"/>
    <property type="match status" value="1"/>
</dbReference>
<dbReference type="Gene3D" id="3.30.930.10">
    <property type="entry name" value="Bira Bifunctional Protein, Domain 2"/>
    <property type="match status" value="1"/>
</dbReference>
<dbReference type="Gene3D" id="1.20.58.180">
    <property type="entry name" value="Class II aaRS and biotin synthetases, domain 2"/>
    <property type="match status" value="1"/>
</dbReference>
<dbReference type="HAMAP" id="MF_00254">
    <property type="entry name" value="Gly_tRNA_synth_alpha"/>
    <property type="match status" value="1"/>
</dbReference>
<dbReference type="InterPro" id="IPR045864">
    <property type="entry name" value="aa-tRNA-synth_II/BPL/LPL"/>
</dbReference>
<dbReference type="InterPro" id="IPR006194">
    <property type="entry name" value="Gly-tRNA-synth_heterodimer"/>
</dbReference>
<dbReference type="InterPro" id="IPR002310">
    <property type="entry name" value="Gly-tRNA_ligase_asu"/>
</dbReference>
<dbReference type="NCBIfam" id="TIGR00388">
    <property type="entry name" value="glyQ"/>
    <property type="match status" value="1"/>
</dbReference>
<dbReference type="NCBIfam" id="NF006827">
    <property type="entry name" value="PRK09348.1"/>
    <property type="match status" value="1"/>
</dbReference>
<dbReference type="PANTHER" id="PTHR30075:SF2">
    <property type="entry name" value="GLYCINE--TRNA LIGASE, CHLOROPLASTIC_MITOCHONDRIAL 2"/>
    <property type="match status" value="1"/>
</dbReference>
<dbReference type="PANTHER" id="PTHR30075">
    <property type="entry name" value="GLYCYL-TRNA SYNTHETASE"/>
    <property type="match status" value="1"/>
</dbReference>
<dbReference type="Pfam" id="PF02091">
    <property type="entry name" value="tRNA-synt_2e"/>
    <property type="match status" value="1"/>
</dbReference>
<dbReference type="PRINTS" id="PR01044">
    <property type="entry name" value="TRNASYNTHGA"/>
</dbReference>
<dbReference type="SUPFAM" id="SSF55681">
    <property type="entry name" value="Class II aaRS and biotin synthetases"/>
    <property type="match status" value="1"/>
</dbReference>
<dbReference type="PROSITE" id="PS50861">
    <property type="entry name" value="AA_TRNA_LIGASE_II_GLYAB"/>
    <property type="match status" value="1"/>
</dbReference>
<sequence>MHFQNVILTLQNYWASRGCVITQPIDVECGAGTFNPSTFLRVIGPEPWNVAYVEPSRRPTDGRYGENPNRLQHYFQFQVILKPSPDNVQELYLGSLRALGIDPAAHDIRFVEDDWESPTLGAWGLGWEVWLNGMEVTQFTYFQQVGGIDLAPTSVEITYGLERLCMYLQGKESVYDLDWNEHVTYGDIYHQNEVEQSKYNFERSDAAMLLHAFNAYETECRRLTEEGLLWPAYDYCLKCSHTFNLLDARGAISITERTGYIGRVRYLASGVARLYAAQREQLGYPMLRK</sequence>
<feature type="chain" id="PRO_1000047416" description="Glycine--tRNA ligase alpha subunit">
    <location>
        <begin position="1"/>
        <end position="289"/>
    </location>
</feature>
<comment type="catalytic activity">
    <reaction evidence="1">
        <text>tRNA(Gly) + glycine + ATP = glycyl-tRNA(Gly) + AMP + diphosphate</text>
        <dbReference type="Rhea" id="RHEA:16013"/>
        <dbReference type="Rhea" id="RHEA-COMP:9664"/>
        <dbReference type="Rhea" id="RHEA-COMP:9683"/>
        <dbReference type="ChEBI" id="CHEBI:30616"/>
        <dbReference type="ChEBI" id="CHEBI:33019"/>
        <dbReference type="ChEBI" id="CHEBI:57305"/>
        <dbReference type="ChEBI" id="CHEBI:78442"/>
        <dbReference type="ChEBI" id="CHEBI:78522"/>
        <dbReference type="ChEBI" id="CHEBI:456215"/>
        <dbReference type="EC" id="6.1.1.14"/>
    </reaction>
</comment>
<comment type="subunit">
    <text evidence="1">Tetramer of two alpha and two beta subunits.</text>
</comment>
<comment type="subcellular location">
    <subcellularLocation>
        <location evidence="1">Cytoplasm</location>
    </subcellularLocation>
</comment>
<comment type="similarity">
    <text evidence="1">Belongs to the class-II aminoacyl-tRNA synthetase family.</text>
</comment>
<name>SYGA_NITV2</name>
<protein>
    <recommendedName>
        <fullName evidence="1">Glycine--tRNA ligase alpha subunit</fullName>
        <ecNumber evidence="1">6.1.1.14</ecNumber>
    </recommendedName>
    <alternativeName>
        <fullName evidence="1">Glycyl-tRNA synthetase alpha subunit</fullName>
        <shortName evidence="1">GlyRS</shortName>
    </alternativeName>
</protein>
<accession>Q72AU2</accession>
<keyword id="KW-0030">Aminoacyl-tRNA synthetase</keyword>
<keyword id="KW-0067">ATP-binding</keyword>
<keyword id="KW-0963">Cytoplasm</keyword>
<keyword id="KW-0436">Ligase</keyword>
<keyword id="KW-0547">Nucleotide-binding</keyword>
<keyword id="KW-0648">Protein biosynthesis</keyword>
<keyword id="KW-1185">Reference proteome</keyword>